<accession>Q803H0</accession>
<reference key="1">
    <citation type="submission" date="2003-01" db="EMBL/GenBank/DDBJ databases">
        <authorList>
            <consortium name="NIH - Zebrafish Gene Collection (ZGC) project"/>
        </authorList>
    </citation>
    <scope>NUCLEOTIDE SEQUENCE [LARGE SCALE MRNA]</scope>
    <source>
        <strain>AB</strain>
    </source>
</reference>
<evidence type="ECO:0000256" key="1">
    <source>
        <dbReference type="SAM" id="MobiDB-lite"/>
    </source>
</evidence>
<evidence type="ECO:0000305" key="2"/>
<dbReference type="EMBL" id="BC044488">
    <property type="protein sequence ID" value="AAH44488.1"/>
    <property type="molecule type" value="mRNA"/>
</dbReference>
<dbReference type="SMR" id="Q803H0"/>
<dbReference type="FunCoup" id="Q803H0">
    <property type="interactions" value="522"/>
</dbReference>
<dbReference type="STRING" id="7955.ENSDARP00000122801"/>
<dbReference type="PaxDb" id="7955-ENSDARP00000122801"/>
<dbReference type="AGR" id="ZFIN:ZDB-GENE-030131-4704"/>
<dbReference type="ZFIN" id="ZDB-GENE-030131-4704">
    <property type="gene designation" value="zgc:55781"/>
</dbReference>
<dbReference type="eggNOG" id="KOG4529">
    <property type="taxonomic scope" value="Eukaryota"/>
</dbReference>
<dbReference type="InParanoid" id="Q803H0"/>
<dbReference type="PhylomeDB" id="Q803H0"/>
<dbReference type="PRO" id="PR:Q803H0"/>
<dbReference type="Proteomes" id="UP000000437">
    <property type="component" value="Unplaced"/>
</dbReference>
<dbReference type="InterPro" id="IPR010733">
    <property type="entry name" value="DUF1308"/>
</dbReference>
<dbReference type="InterPro" id="IPR041076">
    <property type="entry name" value="DUF5614"/>
</dbReference>
<dbReference type="PANTHER" id="PTHR13379">
    <property type="entry name" value="UNCHARACTERIZED DUF1308"/>
    <property type="match status" value="1"/>
</dbReference>
<dbReference type="PANTHER" id="PTHR13379:SF0">
    <property type="entry name" value="UPF0415 PROTEIN C7ORF25"/>
    <property type="match status" value="1"/>
</dbReference>
<dbReference type="Pfam" id="PF07000">
    <property type="entry name" value="DUF1308"/>
    <property type="match status" value="1"/>
</dbReference>
<dbReference type="Pfam" id="PF18474">
    <property type="entry name" value="DUF5614"/>
    <property type="match status" value="1"/>
</dbReference>
<protein>
    <recommendedName>
        <fullName>UPF0415 protein C7orf25 homolog</fullName>
    </recommendedName>
</protein>
<sequence>MATYNTLQDRIRVAKELLERVDKICSRQGREVEGRAKLCGKLRAELKFLQKVEAGKVVIKESHLQSTNLTHLKAIVESAESLEKVVSVLHVFAYESPDGQKQTLVVDVVANGGHTWVKSIGRKAEALHNIWQGRGQYGDKSVIRQAEDFLEASQQQPVQYSNPHIIFAFYNGVSSPMADKLKEMGISVRGDIVAVNTIEGGEEEDEEDQEGDHEDLVEEEEDGEDDNDDDSDDTDLMHTRVDRDTIVASLAFPTEVKVDVCNRVNLDITTLITYVSSLSHGNCHFTFKEVVLTEQAAQERQEKVLPRLEEFMKGKELFACQSAVEDFRVILDTLGGPGEKSRAEELLARLKVVPDQPSERTQRLVMSSKVNRRSLMIFGTGDTLRAITMTANSGFVRAAANQGVRFSVFIHQPRALTEGKEWRATPI</sequence>
<organism>
    <name type="scientific">Danio rerio</name>
    <name type="common">Zebrafish</name>
    <name type="synonym">Brachydanio rerio</name>
    <dbReference type="NCBI Taxonomy" id="7955"/>
    <lineage>
        <taxon>Eukaryota</taxon>
        <taxon>Metazoa</taxon>
        <taxon>Chordata</taxon>
        <taxon>Craniata</taxon>
        <taxon>Vertebrata</taxon>
        <taxon>Euteleostomi</taxon>
        <taxon>Actinopterygii</taxon>
        <taxon>Neopterygii</taxon>
        <taxon>Teleostei</taxon>
        <taxon>Ostariophysi</taxon>
        <taxon>Cypriniformes</taxon>
        <taxon>Danionidae</taxon>
        <taxon>Danioninae</taxon>
        <taxon>Danio</taxon>
    </lineage>
</organism>
<feature type="chain" id="PRO_0000279532" description="UPF0415 protein C7orf25 homolog">
    <location>
        <begin position="1"/>
        <end position="427"/>
    </location>
</feature>
<feature type="region of interest" description="Disordered" evidence="1">
    <location>
        <begin position="200"/>
        <end position="236"/>
    </location>
</feature>
<feature type="compositionally biased region" description="Acidic residues" evidence="1">
    <location>
        <begin position="200"/>
        <end position="234"/>
    </location>
</feature>
<keyword id="KW-1185">Reference proteome</keyword>
<proteinExistence type="evidence at transcript level"/>
<comment type="similarity">
    <text evidence="2">Belongs to the UPF0415 family.</text>
</comment>
<name>CG025_DANRE</name>
<gene>
    <name type="ORF">zgc:55781</name>
</gene>